<sequence length="491" mass="53449">MSRQEQTPLFSGVVAHAKHNPVQFHIPGHKKGAGMDPAFRSFIGDNALSIDLINIGPLDDLHHPHGIIKEAQELAAEAFGADHTFFSVQGTSGAIMTMIMSVVGPGEKIIVPRNVHKSIMSAIVFSGATPVFIHPEIDPLLGISHGITIEAVEKALDAHPDAKGLLVINPTYFGIAANLKKIVELCHSRDVPVLVDEAHGVHIHFHEALPLSAMQAGADMAATSVHKLGGSLTQSSILNVREGLVSAKRVQTIISMLTTTSTSYLLLASLDAARKHLATNGRDLIGYTIQLADQARDQINAIDGLYCVGKEILGTIATYDYDPTKLIISVKNLGITGYDAEVWLREHYQIEVELSDLYNILCIVSFGDTEREMDLLVKALSELADLHKHGICERSPVSVYVPNIPTLAMSPRDAFYAETEVVPFEDSVGRTIAEFIMVYPPGIPILIPGEIITESNLAYIRENNRAGLPVQGPEDDTFRTLRVIKEHEAIR</sequence>
<protein>
    <recommendedName>
        <fullName>Arginine decarboxylase</fullName>
        <ecNumber>4.1.1.19</ecNumber>
    </recommendedName>
</protein>
<name>SPEA_HALH5</name>
<feature type="chain" id="PRO_0000201146" description="Arginine decarboxylase">
    <location>
        <begin position="1"/>
        <end position="491"/>
    </location>
</feature>
<feature type="modified residue" description="N6-(pyridoxal phosphate)lysine" evidence="1">
    <location>
        <position position="227"/>
    </location>
</feature>
<proteinExistence type="inferred from homology"/>
<gene>
    <name type="primary">speA</name>
    <name type="ordered locus">BH2640</name>
</gene>
<evidence type="ECO:0000250" key="1"/>
<evidence type="ECO:0000305" key="2"/>
<organism>
    <name type="scientific">Halalkalibacterium halodurans (strain ATCC BAA-125 / DSM 18197 / FERM 7344 / JCM 9153 / C-125)</name>
    <name type="common">Bacillus halodurans</name>
    <dbReference type="NCBI Taxonomy" id="272558"/>
    <lineage>
        <taxon>Bacteria</taxon>
        <taxon>Bacillati</taxon>
        <taxon>Bacillota</taxon>
        <taxon>Bacilli</taxon>
        <taxon>Bacillales</taxon>
        <taxon>Bacillaceae</taxon>
        <taxon>Halalkalibacterium (ex Joshi et al. 2022)</taxon>
    </lineage>
</organism>
<reference key="1">
    <citation type="journal article" date="2000" name="Nucleic Acids Res.">
        <title>Complete genome sequence of the alkaliphilic bacterium Bacillus halodurans and genomic sequence comparison with Bacillus subtilis.</title>
        <authorList>
            <person name="Takami H."/>
            <person name="Nakasone K."/>
            <person name="Takaki Y."/>
            <person name="Maeno G."/>
            <person name="Sasaki R."/>
            <person name="Masui N."/>
            <person name="Fuji F."/>
            <person name="Hirama C."/>
            <person name="Nakamura Y."/>
            <person name="Ogasawara N."/>
            <person name="Kuhara S."/>
            <person name="Horikoshi K."/>
        </authorList>
    </citation>
    <scope>NUCLEOTIDE SEQUENCE [LARGE SCALE GENOMIC DNA]</scope>
    <source>
        <strain>ATCC BAA-125 / DSM 18197 / FERM 7344 / JCM 9153 / C-125</strain>
    </source>
</reference>
<comment type="function">
    <text evidence="1">Catalyzes the formation of agmatine from arginine.</text>
</comment>
<comment type="catalytic activity">
    <reaction>
        <text>L-arginine + H(+) = agmatine + CO2</text>
        <dbReference type="Rhea" id="RHEA:17641"/>
        <dbReference type="ChEBI" id="CHEBI:15378"/>
        <dbReference type="ChEBI" id="CHEBI:16526"/>
        <dbReference type="ChEBI" id="CHEBI:32682"/>
        <dbReference type="ChEBI" id="CHEBI:58145"/>
        <dbReference type="EC" id="4.1.1.19"/>
    </reaction>
</comment>
<comment type="cofactor">
    <cofactor evidence="1">
        <name>pyridoxal 5'-phosphate</name>
        <dbReference type="ChEBI" id="CHEBI:597326"/>
    </cofactor>
</comment>
<comment type="pathway">
    <text>Amine and polyamine biosynthesis; agmatine biosynthesis; agmatine from L-arginine: step 1/1.</text>
</comment>
<comment type="subcellular location">
    <subcellularLocation>
        <location evidence="2">Cytoplasm</location>
    </subcellularLocation>
</comment>
<comment type="similarity">
    <text evidence="2">Belongs to the Orn/Lys/Arg decarboxylase class-I family.</text>
</comment>
<accession>Q9K9K5</accession>
<dbReference type="EC" id="4.1.1.19"/>
<dbReference type="EMBL" id="BA000004">
    <property type="protein sequence ID" value="BAB06359.1"/>
    <property type="molecule type" value="Genomic_DNA"/>
</dbReference>
<dbReference type="PIR" id="H83979">
    <property type="entry name" value="H83979"/>
</dbReference>
<dbReference type="RefSeq" id="WP_010898791.1">
    <property type="nucleotide sequence ID" value="NC_002570.2"/>
</dbReference>
<dbReference type="SMR" id="Q9K9K5"/>
<dbReference type="STRING" id="272558.gene:10728538"/>
<dbReference type="GeneID" id="87598153"/>
<dbReference type="KEGG" id="bha:BH2640"/>
<dbReference type="eggNOG" id="COG1982">
    <property type="taxonomic scope" value="Bacteria"/>
</dbReference>
<dbReference type="HOGENOM" id="CLU_025925_2_1_9"/>
<dbReference type="UniPathway" id="UPA00186">
    <property type="reaction ID" value="UER00284"/>
</dbReference>
<dbReference type="Proteomes" id="UP000001258">
    <property type="component" value="Chromosome"/>
</dbReference>
<dbReference type="GO" id="GO:0005737">
    <property type="term" value="C:cytoplasm"/>
    <property type="evidence" value="ECO:0007669"/>
    <property type="project" value="UniProtKB-SubCell"/>
</dbReference>
<dbReference type="GO" id="GO:0008792">
    <property type="term" value="F:arginine decarboxylase activity"/>
    <property type="evidence" value="ECO:0007669"/>
    <property type="project" value="UniProtKB-EC"/>
</dbReference>
<dbReference type="GO" id="GO:0009446">
    <property type="term" value="P:putrescine biosynthetic process"/>
    <property type="evidence" value="ECO:0007669"/>
    <property type="project" value="UniProtKB-KW"/>
</dbReference>
<dbReference type="GO" id="GO:0008295">
    <property type="term" value="P:spermidine biosynthetic process"/>
    <property type="evidence" value="ECO:0007669"/>
    <property type="project" value="UniProtKB-KW"/>
</dbReference>
<dbReference type="CDD" id="cd00615">
    <property type="entry name" value="Orn_deC_like"/>
    <property type="match status" value="1"/>
</dbReference>
<dbReference type="Gene3D" id="3.90.100.10">
    <property type="entry name" value="Orn/Lys/Arg decarboxylase, C-terminal domain"/>
    <property type="match status" value="1"/>
</dbReference>
<dbReference type="Gene3D" id="3.40.640.10">
    <property type="entry name" value="Type I PLP-dependent aspartate aminotransferase-like (Major domain)"/>
    <property type="match status" value="1"/>
</dbReference>
<dbReference type="InterPro" id="IPR000310">
    <property type="entry name" value="Orn/Lys/Arg_deCO2ase_major_dom"/>
</dbReference>
<dbReference type="InterPro" id="IPR052357">
    <property type="entry name" value="Orn_Lys_Arg_decarboxylase-I"/>
</dbReference>
<dbReference type="InterPro" id="IPR008286">
    <property type="entry name" value="Prn/Lys/Arg_de-COase_C"/>
</dbReference>
<dbReference type="InterPro" id="IPR036633">
    <property type="entry name" value="Prn/Lys/Arg_de-COase_C_sf"/>
</dbReference>
<dbReference type="InterPro" id="IPR015424">
    <property type="entry name" value="PyrdxlP-dep_Trfase"/>
</dbReference>
<dbReference type="InterPro" id="IPR015421">
    <property type="entry name" value="PyrdxlP-dep_Trfase_major"/>
</dbReference>
<dbReference type="PANTHER" id="PTHR43277">
    <property type="entry name" value="ARGININE DECARBOXYLASE"/>
    <property type="match status" value="1"/>
</dbReference>
<dbReference type="PANTHER" id="PTHR43277:SF4">
    <property type="entry name" value="ARGININE DECARBOXYLASE"/>
    <property type="match status" value="1"/>
</dbReference>
<dbReference type="Pfam" id="PF01276">
    <property type="entry name" value="OKR_DC_1"/>
    <property type="match status" value="1"/>
</dbReference>
<dbReference type="Pfam" id="PF03711">
    <property type="entry name" value="OKR_DC_1_C"/>
    <property type="match status" value="1"/>
</dbReference>
<dbReference type="SUPFAM" id="SSF55904">
    <property type="entry name" value="Ornithine decarboxylase C-terminal domain"/>
    <property type="match status" value="1"/>
</dbReference>
<dbReference type="SUPFAM" id="SSF53383">
    <property type="entry name" value="PLP-dependent transferases"/>
    <property type="match status" value="1"/>
</dbReference>
<dbReference type="PROSITE" id="PS00703">
    <property type="entry name" value="OKR_DC_1"/>
    <property type="match status" value="1"/>
</dbReference>
<keyword id="KW-0963">Cytoplasm</keyword>
<keyword id="KW-0210">Decarboxylase</keyword>
<keyword id="KW-0456">Lyase</keyword>
<keyword id="KW-0620">Polyamine biosynthesis</keyword>
<keyword id="KW-0661">Putrescine biosynthesis</keyword>
<keyword id="KW-0663">Pyridoxal phosphate</keyword>
<keyword id="KW-1185">Reference proteome</keyword>
<keyword id="KW-0745">Spermidine biosynthesis</keyword>